<comment type="function">
    <text evidence="2">Cyclic nucleotide phosphodiesterase with specificity for the second messengers cAMP and cGMP, which are key regulators of many important physiological processes. Also has activity toward cUMP. Independently of its catalytic activity it is part of an E2/17beta-estradiol-induced pro-apoptotic signaling pathway. E2 stabilizes the PDE3A/SLFN12 complex in the cytosol, promoting the dephosphorylation of SLFN12 and activating its pro-apoptotic ribosomal RNA/rRNA ribonuclease activity. This apoptotic pathway might be relevant in tissues with high concentration of E2 and be for instance involved in placenta remodeling.</text>
</comment>
<comment type="catalytic activity">
    <reaction evidence="2">
        <text>a nucleoside 3',5'-cyclic phosphate + H2O = a nucleoside 5'-phosphate + H(+)</text>
        <dbReference type="Rhea" id="RHEA:14653"/>
        <dbReference type="ChEBI" id="CHEBI:15377"/>
        <dbReference type="ChEBI" id="CHEBI:15378"/>
        <dbReference type="ChEBI" id="CHEBI:57867"/>
        <dbReference type="ChEBI" id="CHEBI:58464"/>
        <dbReference type="EC" id="3.1.4.17"/>
    </reaction>
    <physiologicalReaction direction="left-to-right" evidence="2">
        <dbReference type="Rhea" id="RHEA:14654"/>
    </physiologicalReaction>
</comment>
<comment type="catalytic activity">
    <reaction evidence="2">
        <text>3',5'-cyclic AMP + H2O = AMP + H(+)</text>
        <dbReference type="Rhea" id="RHEA:25277"/>
        <dbReference type="ChEBI" id="CHEBI:15377"/>
        <dbReference type="ChEBI" id="CHEBI:15378"/>
        <dbReference type="ChEBI" id="CHEBI:58165"/>
        <dbReference type="ChEBI" id="CHEBI:456215"/>
    </reaction>
    <physiologicalReaction direction="left-to-right" evidence="2">
        <dbReference type="Rhea" id="RHEA:25278"/>
    </physiologicalReaction>
</comment>
<comment type="catalytic activity">
    <reaction evidence="2">
        <text>3',5'-cyclic GMP + H2O = GMP + H(+)</text>
        <dbReference type="Rhea" id="RHEA:16957"/>
        <dbReference type="ChEBI" id="CHEBI:15377"/>
        <dbReference type="ChEBI" id="CHEBI:15378"/>
        <dbReference type="ChEBI" id="CHEBI:57746"/>
        <dbReference type="ChEBI" id="CHEBI:58115"/>
    </reaction>
    <physiologicalReaction direction="left-to-right" evidence="2">
        <dbReference type="Rhea" id="RHEA:16958"/>
    </physiologicalReaction>
</comment>
<comment type="catalytic activity">
    <reaction evidence="2">
        <text>3',5'-cyclic UMP + H2O = UMP + H(+)</text>
        <dbReference type="Rhea" id="RHEA:70575"/>
        <dbReference type="ChEBI" id="CHEBI:15377"/>
        <dbReference type="ChEBI" id="CHEBI:15378"/>
        <dbReference type="ChEBI" id="CHEBI:57865"/>
        <dbReference type="ChEBI" id="CHEBI:184387"/>
    </reaction>
    <physiologicalReaction direction="left-to-right" evidence="2">
        <dbReference type="Rhea" id="RHEA:70576"/>
    </physiologicalReaction>
</comment>
<comment type="cofactor">
    <cofactor evidence="2">
        <name>Mn(2+)</name>
        <dbReference type="ChEBI" id="CHEBI:29035"/>
    </cofactor>
    <text evidence="2">Binds 2 divalent metal cations per subunit.</text>
</comment>
<comment type="cofactor">
    <cofactor evidence="2">
        <name>Mg(2+)</name>
        <dbReference type="ChEBI" id="CHEBI:18420"/>
    </cofactor>
    <text evidence="2">Binds 2 divalent metal cations per subunit.</text>
</comment>
<comment type="subunit">
    <text evidence="2">Homodimer. Interacts with PDE3A; direct low affinity interaction which is stimulated by binding of 17beta-estradiol/E2 to PDE3A and that positively regulates the ribonuclease activity of SLFN12.</text>
</comment>
<comment type="subcellular location">
    <subcellularLocation>
        <location evidence="3">Membrane</location>
        <topology evidence="4">Multi-pass membrane protein</topology>
    </subcellularLocation>
    <subcellularLocation>
        <location evidence="2">Cytoplasm</location>
        <location evidence="2">Cytosol</location>
    </subcellularLocation>
</comment>
<comment type="similarity">
    <text evidence="7">Belongs to the cyclic nucleotide phosphodiesterase family. PDE3 subfamily.</text>
</comment>
<keyword id="KW-0114">cAMP</keyword>
<keyword id="KW-0140">cGMP</keyword>
<keyword id="KW-0963">Cytoplasm</keyword>
<keyword id="KW-0378">Hydrolase</keyword>
<keyword id="KW-1017">Isopeptide bond</keyword>
<keyword id="KW-0460">Magnesium</keyword>
<keyword id="KW-0464">Manganese</keyword>
<keyword id="KW-0472">Membrane</keyword>
<keyword id="KW-0479">Metal-binding</keyword>
<keyword id="KW-0597">Phosphoprotein</keyword>
<keyword id="KW-1185">Reference proteome</keyword>
<keyword id="KW-0812">Transmembrane</keyword>
<keyword id="KW-1133">Transmembrane helix</keyword>
<keyword id="KW-0832">Ubl conjugation</keyword>
<feature type="chain" id="PRO_0000198801" description="cGMP-inhibited 3',5'-cyclic phosphodiesterase 3A">
    <location>
        <begin position="1"/>
        <end position="1141"/>
    </location>
</feature>
<feature type="transmembrane region" description="Helical" evidence="4">
    <location>
        <begin position="62"/>
        <end position="82"/>
    </location>
</feature>
<feature type="transmembrane region" description="Helical" evidence="4">
    <location>
        <begin position="127"/>
        <end position="147"/>
    </location>
</feature>
<feature type="transmembrane region" description="Helical" evidence="4">
    <location>
        <begin position="157"/>
        <end position="177"/>
    </location>
</feature>
<feature type="transmembrane region" description="Helical" evidence="4">
    <location>
        <begin position="182"/>
        <end position="202"/>
    </location>
</feature>
<feature type="transmembrane region" description="Helical" evidence="4">
    <location>
        <begin position="207"/>
        <end position="227"/>
    </location>
</feature>
<feature type="transmembrane region" description="Helical" evidence="4">
    <location>
        <begin position="229"/>
        <end position="249"/>
    </location>
</feature>
<feature type="domain" description="PDEase" evidence="5">
    <location>
        <begin position="674"/>
        <end position="1093"/>
    </location>
</feature>
<feature type="region of interest" description="Disordered" evidence="6">
    <location>
        <begin position="1"/>
        <end position="41"/>
    </location>
</feature>
<feature type="region of interest" description="Disordered" evidence="6">
    <location>
        <begin position="89"/>
        <end position="111"/>
    </location>
</feature>
<feature type="region of interest" description="Disordered" evidence="6">
    <location>
        <begin position="262"/>
        <end position="309"/>
    </location>
</feature>
<feature type="region of interest" description="Disordered" evidence="6">
    <location>
        <begin position="433"/>
        <end position="479"/>
    </location>
</feature>
<feature type="region of interest" description="Disordered" evidence="6">
    <location>
        <begin position="504"/>
        <end position="643"/>
    </location>
</feature>
<feature type="region of interest" description="Interaction with SLFN12" evidence="2">
    <location>
        <begin position="669"/>
        <end position="1141"/>
    </location>
</feature>
<feature type="region of interest" description="Disordered" evidence="6">
    <location>
        <begin position="1024"/>
        <end position="1062"/>
    </location>
</feature>
<feature type="region of interest" description="Disordered" evidence="6">
    <location>
        <begin position="1098"/>
        <end position="1141"/>
    </location>
</feature>
<feature type="compositionally biased region" description="Low complexity" evidence="6">
    <location>
        <begin position="433"/>
        <end position="445"/>
    </location>
</feature>
<feature type="compositionally biased region" description="Basic and acidic residues" evidence="6">
    <location>
        <begin position="454"/>
        <end position="467"/>
    </location>
</feature>
<feature type="compositionally biased region" description="Pro residues" evidence="6">
    <location>
        <begin position="522"/>
        <end position="532"/>
    </location>
</feature>
<feature type="compositionally biased region" description="Polar residues" evidence="6">
    <location>
        <begin position="618"/>
        <end position="637"/>
    </location>
</feature>
<feature type="compositionally biased region" description="Acidic residues" evidence="6">
    <location>
        <begin position="1029"/>
        <end position="1046"/>
    </location>
</feature>
<feature type="compositionally biased region" description="Polar residues" evidence="6">
    <location>
        <begin position="1098"/>
        <end position="1113"/>
    </location>
</feature>
<feature type="active site" description="Proton donor" evidence="1">
    <location>
        <position position="752"/>
    </location>
</feature>
<feature type="binding site" evidence="2">
    <location>
        <position position="752"/>
    </location>
    <ligand>
        <name>AMP</name>
        <dbReference type="ChEBI" id="CHEBI:456215"/>
    </ligand>
</feature>
<feature type="binding site" evidence="2">
    <location>
        <position position="756"/>
    </location>
    <ligand>
        <name>Mn(2+)</name>
        <dbReference type="ChEBI" id="CHEBI:29035"/>
    </ligand>
</feature>
<feature type="binding site" evidence="2">
    <location>
        <position position="836"/>
    </location>
    <ligand>
        <name>Mn(2+)</name>
        <dbReference type="ChEBI" id="CHEBI:29035"/>
    </ligand>
</feature>
<feature type="binding site" evidence="2">
    <location>
        <position position="837"/>
    </location>
    <ligand>
        <name>AMP</name>
        <dbReference type="ChEBI" id="CHEBI:456215"/>
    </ligand>
</feature>
<feature type="binding site" evidence="2">
    <location>
        <position position="837"/>
    </location>
    <ligand>
        <name>Mg(2+)</name>
        <dbReference type="ChEBI" id="CHEBI:18420"/>
    </ligand>
</feature>
<feature type="binding site" evidence="2">
    <location>
        <position position="837"/>
    </location>
    <ligand>
        <name>Mn(2+)</name>
        <dbReference type="ChEBI" id="CHEBI:29035"/>
    </ligand>
</feature>
<feature type="binding site" evidence="2">
    <location>
        <position position="950"/>
    </location>
    <ligand>
        <name>AMP</name>
        <dbReference type="ChEBI" id="CHEBI:456215"/>
    </ligand>
</feature>
<feature type="binding site" evidence="2">
    <location>
        <position position="950"/>
    </location>
    <ligand>
        <name>Mn(2+)</name>
        <dbReference type="ChEBI" id="CHEBI:29035"/>
    </ligand>
</feature>
<feature type="binding site" evidence="2">
    <location>
        <position position="1001"/>
    </location>
    <ligand>
        <name>AMP</name>
        <dbReference type="ChEBI" id="CHEBI:456215"/>
    </ligand>
</feature>
<feature type="modified residue" description="Phosphoserine" evidence="2">
    <location>
        <position position="310"/>
    </location>
</feature>
<feature type="modified residue" description="Phosphoserine" evidence="2">
    <location>
        <position position="492"/>
    </location>
</feature>
<feature type="modified residue" description="Phosphoserine" evidence="2">
    <location>
        <position position="520"/>
    </location>
</feature>
<feature type="modified residue" description="Phosphoserine" evidence="3">
    <location>
        <position position="524"/>
    </location>
</feature>
<feature type="modified residue" description="Phosphoserine" evidence="3">
    <location>
        <position position="533"/>
    </location>
</feature>
<feature type="modified residue" description="Phosphoserine" evidence="3">
    <location>
        <position position="1033"/>
    </location>
</feature>
<feature type="modified residue" description="Phosphothreonine" evidence="3">
    <location>
        <position position="1036"/>
    </location>
</feature>
<feature type="cross-link" description="Glycyl lysine isopeptide (Lys-Gly) (interchain with G-Cter in SUMO2)" evidence="2">
    <location>
        <position position="1120"/>
    </location>
</feature>
<reference key="1">
    <citation type="journal article" date="1998" name="Cell Biochem. Biophys.">
        <title>Expression and characterization of deletion recombinants of two cGMP-inhibited cyclic nucleotide phosphodiesterases (PDE-3).</title>
        <authorList>
            <person name="He R."/>
            <person name="Komas N."/>
            <person name="Ekholm D."/>
            <person name="Murata T."/>
            <person name="Taira M."/>
            <person name="Hockman S.C."/>
            <person name="Degerman E."/>
            <person name="Manganiello V.C."/>
        </authorList>
    </citation>
    <scope>NUCLEOTIDE SEQUENCE [MRNA]</scope>
    <source>
        <tissue>Adipose tissue</tissue>
    </source>
</reference>
<reference key="2">
    <citation type="journal article" date="2012" name="Nat. Commun.">
        <title>Quantitative maps of protein phosphorylation sites across 14 different rat organs and tissues.</title>
        <authorList>
            <person name="Lundby A."/>
            <person name="Secher A."/>
            <person name="Lage K."/>
            <person name="Nordsborg N.B."/>
            <person name="Dmytriyev A."/>
            <person name="Lundby C."/>
            <person name="Olsen J.V."/>
        </authorList>
    </citation>
    <scope>IDENTIFICATION BY MASS SPECTROMETRY [LARGE SCALE ANALYSIS]</scope>
</reference>
<name>PDE3A_RAT</name>
<gene>
    <name evidence="8" type="primary">Pde3a</name>
</gene>
<accession>Q62865</accession>
<proteinExistence type="evidence at protein level"/>
<protein>
    <recommendedName>
        <fullName evidence="2">cGMP-inhibited 3',5'-cyclic phosphodiesterase 3A</fullName>
        <ecNumber evidence="2">3.1.4.17</ecNumber>
    </recommendedName>
    <alternativeName>
        <fullName>Cyclic GMP-inhibited phosphodiesterase A</fullName>
        <shortName>CGI-PDE A</shortName>
    </alternativeName>
</protein>
<organism>
    <name type="scientific">Rattus norvegicus</name>
    <name type="common">Rat</name>
    <dbReference type="NCBI Taxonomy" id="10116"/>
    <lineage>
        <taxon>Eukaryota</taxon>
        <taxon>Metazoa</taxon>
        <taxon>Chordata</taxon>
        <taxon>Craniata</taxon>
        <taxon>Vertebrata</taxon>
        <taxon>Euteleostomi</taxon>
        <taxon>Mammalia</taxon>
        <taxon>Eutheria</taxon>
        <taxon>Euarchontoglires</taxon>
        <taxon>Glires</taxon>
        <taxon>Rodentia</taxon>
        <taxon>Myomorpha</taxon>
        <taxon>Muroidea</taxon>
        <taxon>Muridae</taxon>
        <taxon>Murinae</taxon>
        <taxon>Rattus</taxon>
    </lineage>
</organism>
<dbReference type="EC" id="3.1.4.17" evidence="2"/>
<dbReference type="EMBL" id="U38179">
    <property type="protein sequence ID" value="AAA84964.1"/>
    <property type="molecule type" value="mRNA"/>
</dbReference>
<dbReference type="RefSeq" id="NP_059033.1">
    <property type="nucleotide sequence ID" value="NM_017337.1"/>
</dbReference>
<dbReference type="SMR" id="Q62865"/>
<dbReference type="BioGRID" id="248419">
    <property type="interactions" value="2"/>
</dbReference>
<dbReference type="CORUM" id="Q62865"/>
<dbReference type="FunCoup" id="Q62865">
    <property type="interactions" value="53"/>
</dbReference>
<dbReference type="IntAct" id="Q62865">
    <property type="interactions" value="1"/>
</dbReference>
<dbReference type="STRING" id="10116.ENSRNOP00000032282"/>
<dbReference type="PhosphoSitePlus" id="Q62865"/>
<dbReference type="PaxDb" id="10116-ENSRNOP00000032282"/>
<dbReference type="Ensembl" id="ENSRNOT00000032843.2">
    <property type="protein sequence ID" value="ENSRNOP00000032282.1"/>
    <property type="gene ID" value="ENSRNOG00000025042.2"/>
</dbReference>
<dbReference type="GeneID" id="50678"/>
<dbReference type="KEGG" id="rno:50678"/>
<dbReference type="UCSC" id="RGD:61942">
    <property type="organism name" value="rat"/>
</dbReference>
<dbReference type="AGR" id="RGD:61942"/>
<dbReference type="CTD" id="5139"/>
<dbReference type="RGD" id="61942">
    <property type="gene designation" value="Pde3a"/>
</dbReference>
<dbReference type="eggNOG" id="ENOG502QSV8">
    <property type="taxonomic scope" value="Eukaryota"/>
</dbReference>
<dbReference type="GeneTree" id="ENSGT00940000156628"/>
<dbReference type="HOGENOM" id="CLU_008844_0_0_1"/>
<dbReference type="InParanoid" id="Q62865"/>
<dbReference type="OMA" id="CIPREQI"/>
<dbReference type="OrthoDB" id="546632at2759"/>
<dbReference type="PhylomeDB" id="Q62865"/>
<dbReference type="TreeFam" id="TF329631"/>
<dbReference type="Reactome" id="R-RNO-418555">
    <property type="pathway name" value="G alpha (s) signalling events"/>
</dbReference>
<dbReference type="SABIO-RK" id="Q62865"/>
<dbReference type="PRO" id="PR:Q62865"/>
<dbReference type="Proteomes" id="UP000002494">
    <property type="component" value="Chromosome 4"/>
</dbReference>
<dbReference type="Bgee" id="ENSRNOG00000025042">
    <property type="expression patterns" value="Expressed in heart and 17 other cell types or tissues"/>
</dbReference>
<dbReference type="GO" id="GO:0005829">
    <property type="term" value="C:cytosol"/>
    <property type="evidence" value="ECO:0000266"/>
    <property type="project" value="RGD"/>
</dbReference>
<dbReference type="GO" id="GO:0016020">
    <property type="term" value="C:membrane"/>
    <property type="evidence" value="ECO:0000266"/>
    <property type="project" value="RGD"/>
</dbReference>
<dbReference type="GO" id="GO:0004119">
    <property type="term" value="F:3',5'-cGMP-inhibited cyclic-nucleotide phosphodiesterase activity"/>
    <property type="evidence" value="ECO:0000266"/>
    <property type="project" value="RGD"/>
</dbReference>
<dbReference type="GO" id="GO:0004115">
    <property type="term" value="F:3',5'-cyclic-AMP phosphodiesterase activity"/>
    <property type="evidence" value="ECO:0000266"/>
    <property type="project" value="RGD"/>
</dbReference>
<dbReference type="GO" id="GO:0047555">
    <property type="term" value="F:3',5'-cyclic-GMP phosphodiesterase activity"/>
    <property type="evidence" value="ECO:0000266"/>
    <property type="project" value="RGD"/>
</dbReference>
<dbReference type="GO" id="GO:0004114">
    <property type="term" value="F:3',5'-cyclic-nucleotide phosphodiesterase activity"/>
    <property type="evidence" value="ECO:0000266"/>
    <property type="project" value="RGD"/>
</dbReference>
<dbReference type="GO" id="GO:0004112">
    <property type="term" value="F:cyclic-nucleotide phosphodiesterase activity"/>
    <property type="evidence" value="ECO:0000304"/>
    <property type="project" value="RGD"/>
</dbReference>
<dbReference type="GO" id="GO:0099130">
    <property type="term" value="F:estrogen binding"/>
    <property type="evidence" value="ECO:0000250"/>
    <property type="project" value="UniProtKB"/>
</dbReference>
<dbReference type="GO" id="GO:0046872">
    <property type="term" value="F:metal ion binding"/>
    <property type="evidence" value="ECO:0007669"/>
    <property type="project" value="UniProtKB-KW"/>
</dbReference>
<dbReference type="GO" id="GO:0030284">
    <property type="term" value="F:nuclear estrogen receptor activity"/>
    <property type="evidence" value="ECO:0000266"/>
    <property type="project" value="RGD"/>
</dbReference>
<dbReference type="GO" id="GO:0097190">
    <property type="term" value="P:apoptotic signaling pathway"/>
    <property type="evidence" value="ECO:0000250"/>
    <property type="project" value="UniProtKB"/>
</dbReference>
<dbReference type="GO" id="GO:0019933">
    <property type="term" value="P:cAMP-mediated signaling"/>
    <property type="evidence" value="ECO:0000318"/>
    <property type="project" value="GO_Central"/>
</dbReference>
<dbReference type="GO" id="GO:0071321">
    <property type="term" value="P:cellular response to cGMP"/>
    <property type="evidence" value="ECO:0000266"/>
    <property type="project" value="RGD"/>
</dbReference>
<dbReference type="GO" id="GO:0071560">
    <property type="term" value="P:cellular response to transforming growth factor beta stimulus"/>
    <property type="evidence" value="ECO:0000266"/>
    <property type="project" value="RGD"/>
</dbReference>
<dbReference type="GO" id="GO:0019934">
    <property type="term" value="P:cGMP-mediated signaling"/>
    <property type="evidence" value="ECO:0000266"/>
    <property type="project" value="RGD"/>
</dbReference>
<dbReference type="GO" id="GO:0106072">
    <property type="term" value="P:negative regulation of adenylate cyclase-activating G protein-coupled receptor signaling pathway"/>
    <property type="evidence" value="ECO:0000266"/>
    <property type="project" value="RGD"/>
</dbReference>
<dbReference type="GO" id="GO:0043066">
    <property type="term" value="P:negative regulation of apoptotic process"/>
    <property type="evidence" value="ECO:0000315"/>
    <property type="project" value="RGD"/>
</dbReference>
<dbReference type="GO" id="GO:0141162">
    <property type="term" value="P:negative regulation of cAMP/PKA signal transduction"/>
    <property type="evidence" value="ECO:0000315"/>
    <property type="project" value="RGD"/>
</dbReference>
<dbReference type="GO" id="GO:0043116">
    <property type="term" value="P:negative regulation of vascular permeability"/>
    <property type="evidence" value="ECO:0000266"/>
    <property type="project" value="RGD"/>
</dbReference>
<dbReference type="GO" id="GO:0048599">
    <property type="term" value="P:oocyte development"/>
    <property type="evidence" value="ECO:0000266"/>
    <property type="project" value="RGD"/>
</dbReference>
<dbReference type="GO" id="GO:0001556">
    <property type="term" value="P:oocyte maturation"/>
    <property type="evidence" value="ECO:0000270"/>
    <property type="project" value="RGD"/>
</dbReference>
<dbReference type="GO" id="GO:0060282">
    <property type="term" value="P:positive regulation of oocyte development"/>
    <property type="evidence" value="ECO:0000266"/>
    <property type="project" value="RGD"/>
</dbReference>
<dbReference type="GO" id="GO:0043117">
    <property type="term" value="P:positive regulation of vascular permeability"/>
    <property type="evidence" value="ECO:0000266"/>
    <property type="project" value="RGD"/>
</dbReference>
<dbReference type="GO" id="GO:0040020">
    <property type="term" value="P:regulation of meiotic nuclear division"/>
    <property type="evidence" value="ECO:0000266"/>
    <property type="project" value="RGD"/>
</dbReference>
<dbReference type="GO" id="GO:0060700">
    <property type="term" value="P:regulation of ribonuclease activity"/>
    <property type="evidence" value="ECO:0000250"/>
    <property type="project" value="UniProtKB"/>
</dbReference>
<dbReference type="GO" id="GO:0009410">
    <property type="term" value="P:response to xenobiotic stimulus"/>
    <property type="evidence" value="ECO:0000266"/>
    <property type="project" value="RGD"/>
</dbReference>
<dbReference type="CDD" id="cd00077">
    <property type="entry name" value="HDc"/>
    <property type="match status" value="1"/>
</dbReference>
<dbReference type="FunFam" id="1.10.1300.10:FF:000008">
    <property type="entry name" value="Phosphodiesterase"/>
    <property type="match status" value="1"/>
</dbReference>
<dbReference type="Gene3D" id="1.10.1300.10">
    <property type="entry name" value="3'5'-cyclic nucleotide phosphodiesterase, catalytic domain"/>
    <property type="match status" value="1"/>
</dbReference>
<dbReference type="InterPro" id="IPR003607">
    <property type="entry name" value="HD/PDEase_dom"/>
</dbReference>
<dbReference type="InterPro" id="IPR002073">
    <property type="entry name" value="PDEase_catalytic_dom"/>
</dbReference>
<dbReference type="InterPro" id="IPR036971">
    <property type="entry name" value="PDEase_catalytic_dom_sf"/>
</dbReference>
<dbReference type="InterPro" id="IPR023174">
    <property type="entry name" value="PDEase_CS"/>
</dbReference>
<dbReference type="PANTHER" id="PTHR11347">
    <property type="entry name" value="CYCLIC NUCLEOTIDE PHOSPHODIESTERASE"/>
    <property type="match status" value="1"/>
</dbReference>
<dbReference type="Pfam" id="PF00233">
    <property type="entry name" value="PDEase_I"/>
    <property type="match status" value="1"/>
</dbReference>
<dbReference type="SMART" id="SM00471">
    <property type="entry name" value="HDc"/>
    <property type="match status" value="1"/>
</dbReference>
<dbReference type="SUPFAM" id="SSF109604">
    <property type="entry name" value="HD-domain/PDEase-like"/>
    <property type="match status" value="1"/>
</dbReference>
<dbReference type="PROSITE" id="PS00126">
    <property type="entry name" value="PDEASE_I_1"/>
    <property type="match status" value="1"/>
</dbReference>
<dbReference type="PROSITE" id="PS51845">
    <property type="entry name" value="PDEASE_I_2"/>
    <property type="match status" value="1"/>
</dbReference>
<evidence type="ECO:0000250" key="1">
    <source>
        <dbReference type="UniProtKB" id="O76083"/>
    </source>
</evidence>
<evidence type="ECO:0000250" key="2">
    <source>
        <dbReference type="UniProtKB" id="Q14432"/>
    </source>
</evidence>
<evidence type="ECO:0000250" key="3">
    <source>
        <dbReference type="UniProtKB" id="Q9Z0X4"/>
    </source>
</evidence>
<evidence type="ECO:0000255" key="4"/>
<evidence type="ECO:0000255" key="5">
    <source>
        <dbReference type="PROSITE-ProRule" id="PRU01192"/>
    </source>
</evidence>
<evidence type="ECO:0000256" key="6">
    <source>
        <dbReference type="SAM" id="MobiDB-lite"/>
    </source>
</evidence>
<evidence type="ECO:0000305" key="7"/>
<evidence type="ECO:0000312" key="8">
    <source>
        <dbReference type="RGD" id="61942"/>
    </source>
</evidence>
<sequence length="1141" mass="124301">MAVRGEAAQDWAKPGLRGPSPAPVARGDHRCRGGSPSSPRGSGCCWRALALQPLRRSPQLSSALCAGSLSVLLALLVRLVGGEVGGELESSQEAAAEEEEEEGARGGVFPGPRGGAPGGGAQLSPWLQPAALLFSLLCAFFWMGLCLLRAGVRLPLAVALLAACCAGEALVQLSLGVGDGRLLSLPAAGVLLSCLGGATWLVLRLRLGVLMVALTSALRTVALVSLERFKVAWRPYLAYLAAVLGLLLARYAEQLLPQCSGPAPPRERFGSQSSARTKEEIPGWKRRRRSSSVVAGEMSGCGGKSHRRTSLPCIPREQLMGHSEWDHKRGSRGSQSGTSVTVDIAVMGEAHGLITDLLADPSLPPNVCTSLRAVSNLLSTQLTFQAIHKPRVNPTVTFSENYTCSDSEEGLEKDKLAIPKRLRRSLPPGLLRRVSSTWTTTTSATGLPTLEPAPVRRDRSASIKPHEAPSPSAVNPDSWNAPVLMTLTKSRSFTSSYAVSAANHVKAKKQNRPGGLDKISPVPSPSSSPPQGSPTSSPVSGIASVQFPESPEVTTKRGPGSHRALTYTQSAPDLSPQIPPSPVICSSCGRPYSQGNPADGPSERSGPAMQKPNRTDDTSQVTSDYETNNNSDSSDILQNDEEAECQREPLRKASACGTYTPQTMIFLDKPILAPEPLVMDNLDSIMDQLNTWNFPIFDLVENIGRKCGRILSQVSYRLFEDMGLFEAFKIPVREFMNYFHALEIGYRDIPYHNRIHATDVLHAVWYLTTQPIPGLPSVIGDHGSASDSDSDSGFTHGHMGYVFSKAYHVPDDKYGCLSGNIPALELMALYVAAAMHDYDHPGRTNAFLVATSAPQAVLYNDRSVLENHHAAAAWNLFMSRPEYNFLVNLDHVEFKHFRFLVIEAILATDLKKHFDFVAKFNAKVNDDVGIDWTNENDRLLVCQMCIKLADINGPAKCKDLHLRWTEGIASEFYEQGDEEASLGLPISPFMDRSAPQLANLQESFISHIVGPLCHSYDSAGLMPGKWVDDSDDSGDTDDPEEEEEEAETPHEEETCENSEAPRKKSFKRRRIYCQITQHLLQNHMMWKKVIEEEQCLSGTENQAPDQAPLQHSSEQIQAIKEEEEEKGKPRAEETLAPQPDL</sequence>